<protein>
    <recommendedName>
        <fullName evidence="1">Oxygen-dependent coproporphyrinogen-III oxidase</fullName>
        <shortName evidence="1">CPO</shortName>
        <shortName evidence="1">Coprogen oxidase</shortName>
        <shortName evidence="1">Coproporphyrinogenase</shortName>
        <ecNumber evidence="1">1.3.3.3</ecNumber>
    </recommendedName>
</protein>
<proteinExistence type="inferred from homology"/>
<sequence>MSVPDATVVKAFLLDLQNRICAGLEQLDGQASFAADSWTRTEGGGGTSRVLTQGAVFEQAGVNFSHVTGAAMPASATAHRPELAGRSFEAMGVSLVIHPKNPYIPTTHANVRFFIAHKDGADPVWWFGGGFDLTPYYPFEEDVREWHQTAKNLCLPFGDDIYPKYKKWCDEYFFLPHRNETRGVGGLFFDDLNQAGFDKSFDFMQAVGNGFLTAYAPIVERRKETPYGEREREFQLYRRGRYVEFNLVYDRGTLFGLQTGGRTESILMSMPPLVRWQYAYTPEAGSPEADLYDNYLKPRDWV</sequence>
<comment type="function">
    <text evidence="1">Involved in the heme biosynthesis. Catalyzes the aerobic oxidative decarboxylation of propionate groups of rings A and B of coproporphyrinogen-III to yield the vinyl groups in protoporphyrinogen-IX.</text>
</comment>
<comment type="catalytic activity">
    <reaction evidence="1">
        <text>coproporphyrinogen III + O2 + 2 H(+) = protoporphyrinogen IX + 2 CO2 + 2 H2O</text>
        <dbReference type="Rhea" id="RHEA:18257"/>
        <dbReference type="ChEBI" id="CHEBI:15377"/>
        <dbReference type="ChEBI" id="CHEBI:15378"/>
        <dbReference type="ChEBI" id="CHEBI:15379"/>
        <dbReference type="ChEBI" id="CHEBI:16526"/>
        <dbReference type="ChEBI" id="CHEBI:57307"/>
        <dbReference type="ChEBI" id="CHEBI:57309"/>
        <dbReference type="EC" id="1.3.3.3"/>
    </reaction>
</comment>
<comment type="cofactor">
    <cofactor evidence="1">
        <name>a divalent metal cation</name>
        <dbReference type="ChEBI" id="CHEBI:60240"/>
    </cofactor>
</comment>
<comment type="pathway">
    <text evidence="1">Porphyrin-containing compound metabolism; protoporphyrin-IX biosynthesis; protoporphyrinogen-IX from coproporphyrinogen-III (O2 route): step 1/1.</text>
</comment>
<comment type="subunit">
    <text evidence="1">Homodimer.</text>
</comment>
<comment type="subcellular location">
    <subcellularLocation>
        <location evidence="1">Cytoplasm</location>
    </subcellularLocation>
</comment>
<comment type="similarity">
    <text evidence="1">Belongs to the aerobic coproporphyrinogen-III oxidase family.</text>
</comment>
<dbReference type="EC" id="1.3.3.3" evidence="1"/>
<dbReference type="EMBL" id="CP000444">
    <property type="protein sequence ID" value="ABI41039.1"/>
    <property type="molecule type" value="Genomic_DNA"/>
</dbReference>
<dbReference type="SMR" id="Q0I0R6"/>
<dbReference type="KEGG" id="shm:Shewmr7_0033"/>
<dbReference type="HOGENOM" id="CLU_026169_0_1_6"/>
<dbReference type="UniPathway" id="UPA00251">
    <property type="reaction ID" value="UER00322"/>
</dbReference>
<dbReference type="GO" id="GO:0005737">
    <property type="term" value="C:cytoplasm"/>
    <property type="evidence" value="ECO:0007669"/>
    <property type="project" value="UniProtKB-SubCell"/>
</dbReference>
<dbReference type="GO" id="GO:0004109">
    <property type="term" value="F:coproporphyrinogen oxidase activity"/>
    <property type="evidence" value="ECO:0007669"/>
    <property type="project" value="UniProtKB-UniRule"/>
</dbReference>
<dbReference type="GO" id="GO:0046872">
    <property type="term" value="F:metal ion binding"/>
    <property type="evidence" value="ECO:0007669"/>
    <property type="project" value="UniProtKB-KW"/>
</dbReference>
<dbReference type="GO" id="GO:0042803">
    <property type="term" value="F:protein homodimerization activity"/>
    <property type="evidence" value="ECO:0000250"/>
    <property type="project" value="UniProtKB"/>
</dbReference>
<dbReference type="GO" id="GO:0006782">
    <property type="term" value="P:protoporphyrinogen IX biosynthetic process"/>
    <property type="evidence" value="ECO:0007669"/>
    <property type="project" value="UniProtKB-UniRule"/>
</dbReference>
<dbReference type="FunFam" id="3.40.1500.10:FF:000001">
    <property type="entry name" value="Oxygen-dependent coproporphyrinogen-III oxidase"/>
    <property type="match status" value="1"/>
</dbReference>
<dbReference type="Gene3D" id="3.40.1500.10">
    <property type="entry name" value="Coproporphyrinogen III oxidase, aerobic"/>
    <property type="match status" value="1"/>
</dbReference>
<dbReference type="HAMAP" id="MF_00333">
    <property type="entry name" value="Coprogen_oxidas"/>
    <property type="match status" value="1"/>
</dbReference>
<dbReference type="InterPro" id="IPR001260">
    <property type="entry name" value="Coprogen_oxidase_aer"/>
</dbReference>
<dbReference type="InterPro" id="IPR036406">
    <property type="entry name" value="Coprogen_oxidase_aer_sf"/>
</dbReference>
<dbReference type="InterPro" id="IPR018375">
    <property type="entry name" value="Coprogen_oxidase_CS"/>
</dbReference>
<dbReference type="NCBIfam" id="NF003727">
    <property type="entry name" value="PRK05330.1"/>
    <property type="match status" value="1"/>
</dbReference>
<dbReference type="PANTHER" id="PTHR10755">
    <property type="entry name" value="COPROPORPHYRINOGEN III OXIDASE, MITOCHONDRIAL"/>
    <property type="match status" value="1"/>
</dbReference>
<dbReference type="PANTHER" id="PTHR10755:SF0">
    <property type="entry name" value="OXYGEN-DEPENDENT COPROPORPHYRINOGEN-III OXIDASE, MITOCHONDRIAL"/>
    <property type="match status" value="1"/>
</dbReference>
<dbReference type="Pfam" id="PF01218">
    <property type="entry name" value="Coprogen_oxidas"/>
    <property type="match status" value="1"/>
</dbReference>
<dbReference type="PIRSF" id="PIRSF000166">
    <property type="entry name" value="Coproporphyri_ox"/>
    <property type="match status" value="1"/>
</dbReference>
<dbReference type="PRINTS" id="PR00073">
    <property type="entry name" value="COPRGNOXDASE"/>
</dbReference>
<dbReference type="SUPFAM" id="SSF102886">
    <property type="entry name" value="Coproporphyrinogen III oxidase"/>
    <property type="match status" value="1"/>
</dbReference>
<dbReference type="PROSITE" id="PS01021">
    <property type="entry name" value="COPROGEN_OXIDASE"/>
    <property type="match status" value="1"/>
</dbReference>
<organism>
    <name type="scientific">Shewanella sp. (strain MR-7)</name>
    <dbReference type="NCBI Taxonomy" id="60481"/>
    <lineage>
        <taxon>Bacteria</taxon>
        <taxon>Pseudomonadati</taxon>
        <taxon>Pseudomonadota</taxon>
        <taxon>Gammaproteobacteria</taxon>
        <taxon>Alteromonadales</taxon>
        <taxon>Shewanellaceae</taxon>
        <taxon>Shewanella</taxon>
    </lineage>
</organism>
<gene>
    <name evidence="1" type="primary">hemF</name>
    <name type="ordered locus">Shewmr7_0033</name>
</gene>
<reference key="1">
    <citation type="submission" date="2006-08" db="EMBL/GenBank/DDBJ databases">
        <title>Complete sequence of chromosome 1 of Shewanella sp. MR-7.</title>
        <authorList>
            <person name="Copeland A."/>
            <person name="Lucas S."/>
            <person name="Lapidus A."/>
            <person name="Barry K."/>
            <person name="Detter J.C."/>
            <person name="Glavina del Rio T."/>
            <person name="Hammon N."/>
            <person name="Israni S."/>
            <person name="Dalin E."/>
            <person name="Tice H."/>
            <person name="Pitluck S."/>
            <person name="Kiss H."/>
            <person name="Brettin T."/>
            <person name="Bruce D."/>
            <person name="Han C."/>
            <person name="Tapia R."/>
            <person name="Gilna P."/>
            <person name="Schmutz J."/>
            <person name="Larimer F."/>
            <person name="Land M."/>
            <person name="Hauser L."/>
            <person name="Kyrpides N."/>
            <person name="Mikhailova N."/>
            <person name="Nealson K."/>
            <person name="Konstantinidis K."/>
            <person name="Klappenbach J."/>
            <person name="Tiedje J."/>
            <person name="Richardson P."/>
        </authorList>
    </citation>
    <scope>NUCLEOTIDE SEQUENCE [LARGE SCALE GENOMIC DNA]</scope>
    <source>
        <strain>MR-7</strain>
    </source>
</reference>
<name>HEM6_SHESR</name>
<feature type="chain" id="PRO_1000019503" description="Oxygen-dependent coproporphyrinogen-III oxidase">
    <location>
        <begin position="1"/>
        <end position="302"/>
    </location>
</feature>
<feature type="region of interest" description="Important for dimerization" evidence="1">
    <location>
        <begin position="242"/>
        <end position="277"/>
    </location>
</feature>
<feature type="active site" description="Proton donor" evidence="1">
    <location>
        <position position="108"/>
    </location>
</feature>
<feature type="binding site" evidence="1">
    <location>
        <position position="94"/>
    </location>
    <ligand>
        <name>substrate</name>
    </ligand>
</feature>
<feature type="binding site" evidence="1">
    <location>
        <position position="98"/>
    </location>
    <ligand>
        <name>a divalent metal cation</name>
        <dbReference type="ChEBI" id="CHEBI:60240"/>
    </ligand>
</feature>
<feature type="binding site" evidence="1">
    <location>
        <position position="108"/>
    </location>
    <ligand>
        <name>a divalent metal cation</name>
        <dbReference type="ChEBI" id="CHEBI:60240"/>
    </ligand>
</feature>
<feature type="binding site" evidence="1">
    <location>
        <begin position="110"/>
        <end position="112"/>
    </location>
    <ligand>
        <name>substrate</name>
    </ligand>
</feature>
<feature type="binding site" evidence="1">
    <location>
        <position position="147"/>
    </location>
    <ligand>
        <name>a divalent metal cation</name>
        <dbReference type="ChEBI" id="CHEBI:60240"/>
    </ligand>
</feature>
<feature type="binding site" evidence="1">
    <location>
        <position position="177"/>
    </location>
    <ligand>
        <name>a divalent metal cation</name>
        <dbReference type="ChEBI" id="CHEBI:60240"/>
    </ligand>
</feature>
<feature type="binding site" evidence="1">
    <location>
        <begin position="260"/>
        <end position="262"/>
    </location>
    <ligand>
        <name>substrate</name>
    </ligand>
</feature>
<feature type="site" description="Important for dimerization" evidence="1">
    <location>
        <position position="177"/>
    </location>
</feature>
<accession>Q0I0R6</accession>
<keyword id="KW-0963">Cytoplasm</keyword>
<keyword id="KW-0350">Heme biosynthesis</keyword>
<keyword id="KW-0479">Metal-binding</keyword>
<keyword id="KW-0560">Oxidoreductase</keyword>
<keyword id="KW-0627">Porphyrin biosynthesis</keyword>
<evidence type="ECO:0000255" key="1">
    <source>
        <dbReference type="HAMAP-Rule" id="MF_00333"/>
    </source>
</evidence>